<accession>P0A6H5</accession>
<accession>P32168</accession>
<accession>Q2M8M7</accession>
<organism>
    <name type="scientific">Escherichia coli (strain K12)</name>
    <dbReference type="NCBI Taxonomy" id="83333"/>
    <lineage>
        <taxon>Bacteria</taxon>
        <taxon>Pseudomonadati</taxon>
        <taxon>Pseudomonadota</taxon>
        <taxon>Gammaproteobacteria</taxon>
        <taxon>Enterobacterales</taxon>
        <taxon>Enterobacteriaceae</taxon>
        <taxon>Escherichia</taxon>
    </lineage>
</organism>
<dbReference type="EMBL" id="L19201">
    <property type="protein sequence ID" value="AAB03063.1"/>
    <property type="molecule type" value="Genomic_DNA"/>
</dbReference>
<dbReference type="EMBL" id="U00096">
    <property type="protein sequence ID" value="AAC76913.1"/>
    <property type="molecule type" value="Genomic_DNA"/>
</dbReference>
<dbReference type="EMBL" id="AP009048">
    <property type="protein sequence ID" value="BAE77379.1"/>
    <property type="molecule type" value="Genomic_DNA"/>
</dbReference>
<dbReference type="PIR" id="JT0761">
    <property type="entry name" value="JT0761"/>
</dbReference>
<dbReference type="RefSeq" id="NP_418366.1">
    <property type="nucleotide sequence ID" value="NC_000913.3"/>
</dbReference>
<dbReference type="RefSeq" id="WP_001293341.1">
    <property type="nucleotide sequence ID" value="NZ_STEB01000017.1"/>
</dbReference>
<dbReference type="PDB" id="1DO0">
    <property type="method" value="X-ray"/>
    <property type="resolution" value="3.00 A"/>
    <property type="chains" value="A/B/C/D/E/F=2-443"/>
</dbReference>
<dbReference type="PDB" id="1DO2">
    <property type="method" value="X-ray"/>
    <property type="resolution" value="4.00 A"/>
    <property type="chains" value="A/B/C/D=2-443"/>
</dbReference>
<dbReference type="PDB" id="1E94">
    <property type="method" value="X-ray"/>
    <property type="resolution" value="2.80 A"/>
    <property type="chains" value="E/F=2-443"/>
</dbReference>
<dbReference type="PDB" id="1G4A">
    <property type="method" value="X-ray"/>
    <property type="resolution" value="3.00 A"/>
    <property type="chains" value="E/F=1-443"/>
</dbReference>
<dbReference type="PDB" id="1G4B">
    <property type="method" value="X-ray"/>
    <property type="resolution" value="7.00 A"/>
    <property type="chains" value="E/F/K/L=1-443"/>
</dbReference>
<dbReference type="PDB" id="1HQY">
    <property type="method" value="X-ray"/>
    <property type="resolution" value="2.80 A"/>
    <property type="chains" value="E/F=2-443"/>
</dbReference>
<dbReference type="PDB" id="1HT1">
    <property type="method" value="X-ray"/>
    <property type="resolution" value="2.80 A"/>
    <property type="chains" value="E/F/G/I=2-443"/>
</dbReference>
<dbReference type="PDB" id="1HT2">
    <property type="method" value="X-ray"/>
    <property type="resolution" value="2.80 A"/>
    <property type="chains" value="E/F/G/H=2-443"/>
</dbReference>
<dbReference type="PDB" id="1YYF">
    <property type="method" value="X-ray"/>
    <property type="resolution" value="4.16 A"/>
    <property type="chains" value="A/B=1-443"/>
</dbReference>
<dbReference type="PDB" id="5JI3">
    <property type="method" value="X-ray"/>
    <property type="resolution" value="3.00 A"/>
    <property type="chains" value="E/F=1-443"/>
</dbReference>
<dbReference type="PDB" id="5TXV">
    <property type="method" value="X-ray"/>
    <property type="resolution" value="7.09 A"/>
    <property type="chains" value="A/B/C/D/E/F/G/H/I/J/K/L/M/N/O/P/Q/R/S/T/U/V/W/X=2-443"/>
</dbReference>
<dbReference type="PDB" id="6PXI">
    <property type="method" value="X-ray"/>
    <property type="resolution" value="3.45 A"/>
    <property type="chains" value="E/F=2-443"/>
</dbReference>
<dbReference type="PDB" id="6PXK">
    <property type="method" value="X-ray"/>
    <property type="resolution" value="3.65 A"/>
    <property type="chains" value="A/B/C/D/E/F/G/H/I/J/K/L=2-443"/>
</dbReference>
<dbReference type="PDB" id="6PXL">
    <property type="method" value="X-ray"/>
    <property type="resolution" value="3.74 A"/>
    <property type="chains" value="A/B/C/D/E/F/G/H/I/J/K/L=2-443"/>
</dbReference>
<dbReference type="PDBsum" id="1DO0"/>
<dbReference type="PDBsum" id="1DO2"/>
<dbReference type="PDBsum" id="1E94"/>
<dbReference type="PDBsum" id="1G4A"/>
<dbReference type="PDBsum" id="1G4B"/>
<dbReference type="PDBsum" id="1HQY"/>
<dbReference type="PDBsum" id="1HT1"/>
<dbReference type="PDBsum" id="1HT2"/>
<dbReference type="PDBsum" id="1YYF"/>
<dbReference type="PDBsum" id="5JI3"/>
<dbReference type="PDBsum" id="5TXV"/>
<dbReference type="PDBsum" id="6PXI"/>
<dbReference type="PDBsum" id="6PXK"/>
<dbReference type="PDBsum" id="6PXL"/>
<dbReference type="SMR" id="P0A6H5"/>
<dbReference type="BioGRID" id="4261787">
    <property type="interactions" value="257"/>
</dbReference>
<dbReference type="ComplexPortal" id="CPX-2104">
    <property type="entry name" value="HslUV protease complex"/>
</dbReference>
<dbReference type="DIP" id="DIP-31855N"/>
<dbReference type="FunCoup" id="P0A6H5">
    <property type="interactions" value="337"/>
</dbReference>
<dbReference type="IntAct" id="P0A6H5">
    <property type="interactions" value="47"/>
</dbReference>
<dbReference type="STRING" id="511145.b3931"/>
<dbReference type="MEROPS" id="X20.005"/>
<dbReference type="jPOST" id="P0A6H5"/>
<dbReference type="PaxDb" id="511145-b3931"/>
<dbReference type="EnsemblBacteria" id="AAC76913">
    <property type="protein sequence ID" value="AAC76913"/>
    <property type="gene ID" value="b3931"/>
</dbReference>
<dbReference type="GeneID" id="93777967"/>
<dbReference type="GeneID" id="948430"/>
<dbReference type="KEGG" id="ecj:JW3902"/>
<dbReference type="KEGG" id="eco:b3931"/>
<dbReference type="KEGG" id="ecoc:C3026_21245"/>
<dbReference type="PATRIC" id="fig|1411691.4.peg.2774"/>
<dbReference type="EchoBASE" id="EB1827"/>
<dbReference type="eggNOG" id="COG1220">
    <property type="taxonomic scope" value="Bacteria"/>
</dbReference>
<dbReference type="HOGENOM" id="CLU_033123_0_0_6"/>
<dbReference type="InParanoid" id="P0A6H5"/>
<dbReference type="OMA" id="YGMIKTD"/>
<dbReference type="OrthoDB" id="9804062at2"/>
<dbReference type="PhylomeDB" id="P0A6H5"/>
<dbReference type="BioCyc" id="EcoCyc:EG11881-MONOMER"/>
<dbReference type="BioCyc" id="MetaCyc:EG11881-MONOMER"/>
<dbReference type="BRENDA" id="3.4.25.2">
    <property type="organism ID" value="2026"/>
</dbReference>
<dbReference type="CD-CODE" id="3A3AD14F">
    <property type="entry name" value="Aggresome"/>
</dbReference>
<dbReference type="EvolutionaryTrace" id="P0A6H5"/>
<dbReference type="PRO" id="PR:P0A6H5"/>
<dbReference type="Proteomes" id="UP000000625">
    <property type="component" value="Chromosome"/>
</dbReference>
<dbReference type="GO" id="GO:0005829">
    <property type="term" value="C:cytosol"/>
    <property type="evidence" value="ECO:0000314"/>
    <property type="project" value="EcoCyc"/>
</dbReference>
<dbReference type="GO" id="GO:0009376">
    <property type="term" value="C:HslUV protease complex"/>
    <property type="evidence" value="ECO:0000314"/>
    <property type="project" value="CAFA"/>
</dbReference>
<dbReference type="GO" id="GO:0016020">
    <property type="term" value="C:membrane"/>
    <property type="evidence" value="ECO:0007005"/>
    <property type="project" value="UniProtKB"/>
</dbReference>
<dbReference type="GO" id="GO:0005524">
    <property type="term" value="F:ATP binding"/>
    <property type="evidence" value="ECO:0000314"/>
    <property type="project" value="CAFA"/>
</dbReference>
<dbReference type="GO" id="GO:0016887">
    <property type="term" value="F:ATP hydrolysis activity"/>
    <property type="evidence" value="ECO:0000314"/>
    <property type="project" value="EcoCyc"/>
</dbReference>
<dbReference type="GO" id="GO:0042802">
    <property type="term" value="F:identical protein binding"/>
    <property type="evidence" value="ECO:0000353"/>
    <property type="project" value="IntAct"/>
</dbReference>
<dbReference type="GO" id="GO:0000287">
    <property type="term" value="F:magnesium ion binding"/>
    <property type="evidence" value="ECO:0000314"/>
    <property type="project" value="CAFA"/>
</dbReference>
<dbReference type="GO" id="GO:0008233">
    <property type="term" value="F:peptidase activity"/>
    <property type="evidence" value="ECO:0007669"/>
    <property type="project" value="InterPro"/>
</dbReference>
<dbReference type="GO" id="GO:0036402">
    <property type="term" value="F:proteasome-activating activity"/>
    <property type="evidence" value="ECO:0007669"/>
    <property type="project" value="UniProtKB-UniRule"/>
</dbReference>
<dbReference type="GO" id="GO:0019904">
    <property type="term" value="F:protein domain specific binding"/>
    <property type="evidence" value="ECO:0000353"/>
    <property type="project" value="CAFA"/>
</dbReference>
<dbReference type="GO" id="GO:0034605">
    <property type="term" value="P:cellular response to heat"/>
    <property type="evidence" value="ECO:0000303"/>
    <property type="project" value="ComplexPortal"/>
</dbReference>
<dbReference type="GO" id="GO:0030164">
    <property type="term" value="P:protein denaturation"/>
    <property type="evidence" value="ECO:0000314"/>
    <property type="project" value="ComplexPortal"/>
</dbReference>
<dbReference type="GO" id="GO:0043335">
    <property type="term" value="P:protein unfolding"/>
    <property type="evidence" value="ECO:0000315"/>
    <property type="project" value="EcoCyc"/>
</dbReference>
<dbReference type="GO" id="GO:0006508">
    <property type="term" value="P:proteolysis"/>
    <property type="evidence" value="ECO:0000314"/>
    <property type="project" value="CAFA"/>
</dbReference>
<dbReference type="GO" id="GO:0051603">
    <property type="term" value="P:proteolysis involved in protein catabolic process"/>
    <property type="evidence" value="ECO:0000318"/>
    <property type="project" value="GO_Central"/>
</dbReference>
<dbReference type="GO" id="GO:0009408">
    <property type="term" value="P:response to heat"/>
    <property type="evidence" value="ECO:0000270"/>
    <property type="project" value="EcoliWiki"/>
</dbReference>
<dbReference type="CDD" id="cd19498">
    <property type="entry name" value="RecA-like_HslU"/>
    <property type="match status" value="1"/>
</dbReference>
<dbReference type="DisProt" id="DP00100"/>
<dbReference type="FunFam" id="1.10.8.10:FF:000012">
    <property type="entry name" value="ATP-dependent protease ATPase subunit HslU"/>
    <property type="match status" value="1"/>
</dbReference>
<dbReference type="FunFam" id="1.10.8.10:FF:000028">
    <property type="entry name" value="ATP-dependent protease ATPase subunit HslU"/>
    <property type="match status" value="1"/>
</dbReference>
<dbReference type="FunFam" id="1.10.8.60:FF:000027">
    <property type="entry name" value="ATP-dependent protease ATPase subunit HslU"/>
    <property type="match status" value="1"/>
</dbReference>
<dbReference type="FunFam" id="3.40.50.300:FF:000213">
    <property type="entry name" value="ATP-dependent protease ATPase subunit HslU"/>
    <property type="match status" value="1"/>
</dbReference>
<dbReference type="FunFam" id="3.40.50.300:FF:000220">
    <property type="entry name" value="ATP-dependent protease ATPase subunit HslU"/>
    <property type="match status" value="1"/>
</dbReference>
<dbReference type="Gene3D" id="1.10.8.60">
    <property type="match status" value="1"/>
</dbReference>
<dbReference type="Gene3D" id="1.10.8.10">
    <property type="entry name" value="DNA helicase RuvA subunit, C-terminal domain"/>
    <property type="match status" value="2"/>
</dbReference>
<dbReference type="Gene3D" id="3.40.50.300">
    <property type="entry name" value="P-loop containing nucleotide triphosphate hydrolases"/>
    <property type="match status" value="1"/>
</dbReference>
<dbReference type="HAMAP" id="MF_00249">
    <property type="entry name" value="HslU"/>
    <property type="match status" value="1"/>
</dbReference>
<dbReference type="InterPro" id="IPR003593">
    <property type="entry name" value="AAA+_ATPase"/>
</dbReference>
<dbReference type="InterPro" id="IPR050052">
    <property type="entry name" value="ATP-dep_Clp_protease_ClpX"/>
</dbReference>
<dbReference type="InterPro" id="IPR003959">
    <property type="entry name" value="ATPase_AAA_core"/>
</dbReference>
<dbReference type="InterPro" id="IPR019489">
    <property type="entry name" value="Clp_ATPase_C"/>
</dbReference>
<dbReference type="InterPro" id="IPR004491">
    <property type="entry name" value="HslU"/>
</dbReference>
<dbReference type="InterPro" id="IPR027417">
    <property type="entry name" value="P-loop_NTPase"/>
</dbReference>
<dbReference type="NCBIfam" id="TIGR00390">
    <property type="entry name" value="hslU"/>
    <property type="match status" value="1"/>
</dbReference>
<dbReference type="NCBIfam" id="NF003544">
    <property type="entry name" value="PRK05201.1"/>
    <property type="match status" value="1"/>
</dbReference>
<dbReference type="PANTHER" id="PTHR48102">
    <property type="entry name" value="ATP-DEPENDENT CLP PROTEASE ATP-BINDING SUBUNIT CLPX-LIKE, MITOCHONDRIAL-RELATED"/>
    <property type="match status" value="1"/>
</dbReference>
<dbReference type="PANTHER" id="PTHR48102:SF3">
    <property type="entry name" value="ATP-DEPENDENT PROTEASE ATPASE SUBUNIT HSLU"/>
    <property type="match status" value="1"/>
</dbReference>
<dbReference type="Pfam" id="PF00004">
    <property type="entry name" value="AAA"/>
    <property type="match status" value="1"/>
</dbReference>
<dbReference type="Pfam" id="PF07724">
    <property type="entry name" value="AAA_2"/>
    <property type="match status" value="1"/>
</dbReference>
<dbReference type="SMART" id="SM00382">
    <property type="entry name" value="AAA"/>
    <property type="match status" value="1"/>
</dbReference>
<dbReference type="SMART" id="SM01086">
    <property type="entry name" value="ClpB_D2-small"/>
    <property type="match status" value="1"/>
</dbReference>
<dbReference type="SUPFAM" id="SSF52540">
    <property type="entry name" value="P-loop containing nucleoside triphosphate hydrolases"/>
    <property type="match status" value="1"/>
</dbReference>
<name>HSLU_ECOLI</name>
<comment type="function">
    <text evidence="1 2 5 8 9 11 12">ATPase subunit of a proteasome-like degradation complex; this subunit has chaperone activity. The binding of ATP and its subsequent hydrolysis by HslU are essential for unfolding of protein substrates subsequently hydrolyzed by HslV. HslU recognizes the N-terminal part of its protein substrates and unfolds these before they are guided to HslV for hydrolysis.</text>
</comment>
<comment type="biophysicochemical properties">
    <kinetics>
        <KM evidence="5 9">0.31 mM for ATP (in the absence of HslV)</KM>
        <KM evidence="5 9">0.28 mM for ATP (in the presence of HslV)</KM>
        <KM evidence="5 9">5.2 uM for Arc-MYL-st11 (at 37 degrees Celsius)</KM>
        <Vmax evidence="5 9">57.0 pmol/min/mg enzyme (in the absence of HslV)</Vmax>
        <Vmax evidence="5 9">213.0 pmol/min/mg enzyme (in the presence of HslV)</Vmax>
        <text>Arc is a repressor protein, Arc-MYL-st11 is a hyperstable variant of Arc.</text>
    </kinetics>
    <temperatureDependence>
        <text evidence="5 9">Optimum temperature is 55 degrees Celsius.</text>
    </temperatureDependence>
</comment>
<comment type="subunit">
    <text evidence="4 6">A double ring-shaped homohexamer of HslV is capped on each side by a ring-shaped HslU homohexamer. The assembly of the HslU/HslV complex is dependent on binding of ATP.</text>
</comment>
<comment type="interaction">
    <interactant intactId="EBI-369317">
        <id>P0A6H5</id>
    </interactant>
    <interactant intactId="EBI-369317">
        <id>P0A6H5</id>
        <label>hslU</label>
    </interactant>
    <organismsDiffer>false</organismsDiffer>
    <experiments>5</experiments>
</comment>
<comment type="interaction">
    <interactant intactId="EBI-369317">
        <id>P0A6H5</id>
    </interactant>
    <interactant intactId="EBI-552265">
        <id>P0A7B8</id>
        <label>hslV</label>
    </interactant>
    <organismsDiffer>false</organismsDiffer>
    <experiments>16</experiments>
</comment>
<comment type="interaction">
    <interactant intactId="EBI-369317">
        <id>P0A6H5</id>
    </interactant>
    <interactant intactId="EBI-2012039">
        <id>P0AFZ5</id>
        <label>sulA</label>
    </interactant>
    <organismsDiffer>false</organismsDiffer>
    <experiments>5</experiments>
</comment>
<comment type="subcellular location">
    <subcellularLocation>
        <location>Cytoplasm</location>
    </subcellularLocation>
</comment>
<comment type="induction">
    <text evidence="7">By heat shock.</text>
</comment>
<comment type="similarity">
    <text evidence="14">Belongs to the ClpX chaperone family. HslU subfamily.</text>
</comment>
<sequence length="443" mass="49594">MSEMTPREIVSELDKHIIGQDNAKRSVAIALRNRWRRMQLNEELRHEVTPKNILMIGPTGVGKTEIARRLAKLANAPFIKVEATKFTEVGYVGKEVDSIIRDLTDAAVKMVRVQAIEKNRYRAEELAEERILDVLIPPAKNNWGQTEQQQEPSAARQAFRKKLREGQLDDKEIEIDLAAAPMGVEIMAPPGMEEMTSQLQSMFQNLGGQKQKARKLKIKDAMKLLIEEEAAKLVNPEELKQDAIDAVEQHGIVFIDEIDKICKRGESSGPDVSREGVQRDLLPLVEGCTVSTKHGMVKTDHILFIASGAFQIAKPSDLIPELQGRLPIRVELQALTTSDFERILTEPNASITVQYKALMATEGVNIEFTDSGIKRIAEAAWQVNESTENIGARRLHTVLERLMEEISYDASDLSGQNITIDADYVSKHLDALVADEDLSRFIL</sequence>
<reference key="1">
    <citation type="journal article" date="1993" name="Gene">
        <title>Sequence analysis of four new heat-shock genes constituting the hslTS/ibpAB and hslVU operons in Escherichia coli.</title>
        <authorList>
            <person name="Chuang S.E."/>
            <person name="Burland V."/>
            <person name="Plunkett G. III"/>
            <person name="Daniels D.L."/>
            <person name="Blattner F.R."/>
        </authorList>
    </citation>
    <scope>NUCLEOTIDE SEQUENCE [GENOMIC DNA]</scope>
    <scope>INDUCTION</scope>
    <source>
        <strain>K12 / MG1655 / ATCC 47076</strain>
    </source>
</reference>
<reference key="2">
    <citation type="journal article" date="1993" name="Nucleic Acids Res.">
        <title>Analysis of the Escherichia coli genome. III. DNA sequence of the region from 87.2 to 89.2 minutes.</title>
        <authorList>
            <person name="Plunkett G. III"/>
            <person name="Burland V."/>
            <person name="Daniels D.L."/>
            <person name="Blattner F.R."/>
        </authorList>
    </citation>
    <scope>NUCLEOTIDE SEQUENCE [LARGE SCALE GENOMIC DNA]</scope>
    <source>
        <strain>K12 / MG1655 / ATCC 47076</strain>
    </source>
</reference>
<reference key="3">
    <citation type="journal article" date="1997" name="Science">
        <title>The complete genome sequence of Escherichia coli K-12.</title>
        <authorList>
            <person name="Blattner F.R."/>
            <person name="Plunkett G. III"/>
            <person name="Bloch C.A."/>
            <person name="Perna N.T."/>
            <person name="Burland V."/>
            <person name="Riley M."/>
            <person name="Collado-Vides J."/>
            <person name="Glasner J.D."/>
            <person name="Rode C.K."/>
            <person name="Mayhew G.F."/>
            <person name="Gregor J."/>
            <person name="Davis N.W."/>
            <person name="Kirkpatrick H.A."/>
            <person name="Goeden M.A."/>
            <person name="Rose D.J."/>
            <person name="Mau B."/>
            <person name="Shao Y."/>
        </authorList>
    </citation>
    <scope>NUCLEOTIDE SEQUENCE [LARGE SCALE GENOMIC DNA]</scope>
    <source>
        <strain>K12 / MG1655 / ATCC 47076</strain>
    </source>
</reference>
<reference key="4">
    <citation type="journal article" date="2006" name="Mol. Syst. Biol.">
        <title>Highly accurate genome sequences of Escherichia coli K-12 strains MG1655 and W3110.</title>
        <authorList>
            <person name="Hayashi K."/>
            <person name="Morooka N."/>
            <person name="Yamamoto Y."/>
            <person name="Fujita K."/>
            <person name="Isono K."/>
            <person name="Choi S."/>
            <person name="Ohtsubo E."/>
            <person name="Baba T."/>
            <person name="Wanner B.L."/>
            <person name="Mori H."/>
            <person name="Horiuchi T."/>
        </authorList>
    </citation>
    <scope>NUCLEOTIDE SEQUENCE [LARGE SCALE GENOMIC DNA]</scope>
    <source>
        <strain>K12 / W3110 / ATCC 27325 / DSM 5911</strain>
    </source>
</reference>
<reference key="5">
    <citation type="journal article" date="1996" name="FEBS Lett.">
        <title>Mutational analysis of the ATP-binding site in HslU, the ATPase component of HslVU protease in Escherichia coli.</title>
        <authorList>
            <person name="Shin D.H."/>
            <person name="Yoo S.J."/>
            <person name="Shim Y.K."/>
            <person name="Seol J.H."/>
            <person name="Kang M.S."/>
            <person name="Chung C.H."/>
        </authorList>
    </citation>
    <scope>MUTAGENESIS OF LYS-63</scope>
</reference>
<reference key="6">
    <citation type="journal article" date="1996" name="J. Biol. Chem.">
        <title>Purification and characterization of the heat shock proteins HslV and HslU that form a new ATP-dependent protease in Escherichia coli.</title>
        <authorList>
            <person name="Yoo S.J."/>
            <person name="Seol J.H."/>
            <person name="Shin D.H."/>
            <person name="Rohrwild M."/>
            <person name="Kang M.-S."/>
            <person name="Tanaka K."/>
            <person name="Goldberg A.L."/>
            <person name="Chung C.H."/>
        </authorList>
    </citation>
    <scope>FUNCTION</scope>
    <scope>SUBSTRATE SPECIFICITY</scope>
    <scope>BIOPHYSICOCHEMICAL PROPERTIES</scope>
</reference>
<reference key="7">
    <citation type="journal article" date="1996" name="Proc. Natl. Acad. Sci. U.S.A.">
        <title>HslV-HslU: A novel ATP-dependent protease complex in Escherichia coli related to the eukaryotic proteasome.</title>
        <authorList>
            <person name="Rohrwild M."/>
            <person name="Coux O."/>
            <person name="Huang H.-C."/>
            <person name="Moerschell R.P."/>
            <person name="Yoo S.J."/>
            <person name="Seol J.H."/>
            <person name="Chung C.H."/>
            <person name="Goldberg A.L."/>
        </authorList>
    </citation>
    <scope>FUNCTION</scope>
    <scope>CATALYTIC ACTIVITY</scope>
</reference>
<reference key="8">
    <citation type="journal article" date="1997" name="Biochem. Biophys. Res. Commun.">
        <title>ATP binding, but not its hydrolysis, is required for assembly and proteolytic activity of the HslVU protease in Escherichia coli.</title>
        <authorList>
            <person name="Yoo S.J."/>
            <person name="Seol J.H."/>
            <person name="Seong I.S."/>
            <person name="Kang M.-S."/>
            <person name="Chung C.H."/>
        </authorList>
    </citation>
    <scope>EFFECTS OF ATP BINDING ON COMPLEX FORMATION</scope>
</reference>
<reference key="9">
    <citation type="journal article" date="1997" name="Electrophoresis">
        <title>Escherichia coli proteome analysis using the gene-protein database.</title>
        <authorList>
            <person name="VanBogelen R.A."/>
            <person name="Abshire K.Z."/>
            <person name="Moldover B."/>
            <person name="Olson E.R."/>
            <person name="Neidhardt F.C."/>
        </authorList>
    </citation>
    <scope>IDENTIFICATION BY 2D-GEL</scope>
</reference>
<reference key="10">
    <citation type="journal article" date="1997" name="Eur. J. Biochem.">
        <title>The heat-shock protein HslVU from Escherichia coli is a protein-activated ATPase as well as an ATP-dependent proteinase.</title>
        <authorList>
            <person name="Seol J.H."/>
            <person name="Yoo S.J."/>
            <person name="Shin D.H."/>
            <person name="Shim Y.K."/>
            <person name="Kang M.-S."/>
            <person name="Goldberg A.L."/>
            <person name="Chung C.H."/>
        </authorList>
    </citation>
    <scope>FUNCTION</scope>
    <scope>CATALYTIC ACTIVITY</scope>
    <scope>SUBSTRATE SPECIFICITY</scope>
</reference>
<reference key="11">
    <citation type="journal article" date="1997" name="J. Bacteriol.">
        <title>Synergistic roles of HslVU and other ATP-dependent proteases in controlling in vivo turnover of sigma32 and abnormal proteins in Escherichia coli.</title>
        <authorList>
            <person name="Kanemori M."/>
            <person name="Nishihara K."/>
            <person name="Yanagi H."/>
            <person name="Yura T."/>
        </authorList>
    </citation>
    <scope>FUNCTION</scope>
    <scope>CATALYTIC ACTIVITY</scope>
</reference>
<reference key="12">
    <citation type="journal article" date="1998" name="J. Biol. Chem.">
        <title>Effects of the cys mutations on structure and function of the ATP-dependent HslVU protease in Escherichia coli. The Cys287 to Val mutation in HslU uncouples the ATP-dependent proteolysis by HslvU from ATP hydrolysis.</title>
        <authorList>
            <person name="Yoo S.J."/>
            <person name="Kim H.H."/>
            <person name="Shin D.H."/>
            <person name="Lee C.S."/>
            <person name="Seong I.S."/>
            <person name="Seol J.H."/>
            <person name="Shimbara N."/>
            <person name="Tanaka K."/>
            <person name="Chung C.H."/>
        </authorList>
    </citation>
    <scope>MUTAGENESIS OF CYS-262 AND CYS-288</scope>
</reference>
<reference key="13">
    <citation type="journal article" date="1999" name="FEBS Lett.">
        <title>ATP-dependent degradation of SulA, a cell division inhibitor, by the HslVU protease in Escherichia coli.</title>
        <authorList>
            <person name="Seong I.S."/>
            <person name="Oh J.Y."/>
            <person name="Yoo S.J."/>
            <person name="Seol J.H."/>
            <person name="Chung C.H."/>
        </authorList>
    </citation>
    <scope>FUNCTION</scope>
    <scope>CATALYTIC ACTIVITY</scope>
</reference>
<reference key="14">
    <citation type="journal article" date="1999" name="J. Biol. Chem.">
        <title>Marked instability of the sigma(32) heat shock transcription factor at high temperature. Implications for heat shock regulation.</title>
        <authorList>
            <person name="Kanemori M."/>
            <person name="Yanagi H."/>
            <person name="Yura T."/>
        </authorList>
    </citation>
    <scope>FUNCTION</scope>
    <scope>CATALYTIC ACTIVITY</scope>
    <scope>CHARACTERIZATION</scope>
</reference>
<reference key="15">
    <citation type="journal article" date="2005" name="Nat. Struct. Mol. Biol.">
        <title>Nucleotide-dependent substrate recognition by the AAA+ HslUV protease.</title>
        <authorList>
            <person name="Burton R.E."/>
            <person name="Baker T.A."/>
            <person name="Sauer R.T."/>
        </authorList>
    </citation>
    <scope>FUNCTION</scope>
    <scope>BIOPHYSICOCHEMICAL PROPERTIES</scope>
</reference>
<reference key="16">
    <citation type="journal article" date="2009" name="J. Biol. Chem.">
        <title>HslVU ATP-dependent protease utilizes maximally six among twelve threonine active sites during proteolysis.</title>
        <authorList>
            <person name="Lee J.W."/>
            <person name="Park E."/>
            <person name="Jeong M.S."/>
            <person name="Jeon Y.J."/>
            <person name="Eom S.H."/>
            <person name="Seol J.H."/>
            <person name="Chung C.H."/>
        </authorList>
    </citation>
    <scope>REACTION MECHANISM</scope>
</reference>
<reference key="17">
    <citation type="journal article" date="2000" name="Nature">
        <title>The structures of HslU and the ATP-dependent protease HslU-HslV.</title>
        <authorList>
            <person name="Bochtler M."/>
            <person name="Hartmann C."/>
            <person name="Song H.K."/>
            <person name="Bourenkov G.P."/>
            <person name="Bartunik H.D."/>
            <person name="Huber R."/>
        </authorList>
    </citation>
    <scope>X-RAY CRYSTALLOGRAPHY (2.81 ANGSTROMS) OF COMPLEXES WITH ATP AND HSLV</scope>
</reference>
<reference key="18">
    <citation type="journal article" date="2000" name="Proc. Natl. Acad. Sci. U.S.A.">
        <title>Mutational studies on HslU and its docking mode with HslV.</title>
        <authorList>
            <person name="Song H.K."/>
            <person name="Hartmann C."/>
            <person name="Ramachandran R."/>
            <person name="Bochtler M."/>
            <person name="Behrendt R."/>
            <person name="Moroder L."/>
            <person name="Huber R."/>
        </authorList>
    </citation>
    <scope>X-RAY CRYSTALLOGRAPHY (2.8 ANGSTROMS) OF 2-176 OF APOENZYME AND IN COMPLEXES WITH HSLV AND ATP</scope>
    <scope>MUTAGENESIS OF LYS-80; GLU-88; TYR-91; VAL-92; GLY-93; GLU-95; GLU-266; GLU-286; ILE-312; GLU-321; ARG-325; GLU-385 AND ARG-393</scope>
</reference>
<reference key="19">
    <citation type="journal article" date="2001" name="Structure">
        <title>Nucleotide-dependent conformational changes in a protease-associated ATPase HslU.</title>
        <authorList>
            <person name="Wang J."/>
            <person name="Song J.J."/>
            <person name="Seong I.S."/>
            <person name="Franklin M.C."/>
            <person name="Kamtekar S."/>
            <person name="Eom S.H."/>
            <person name="Chung C.H."/>
        </authorList>
    </citation>
    <scope>X-RAY CRYSTALLOGRAPHY (2.8 ANGSTROMS) OF 2-443 IN COMPLEX WITH ADP</scope>
</reference>
<reference key="20">
    <citation type="journal article" date="2005" name="Acta Crystallogr. D">
        <title>Correction of X-ray intensities from an HslV-HslU co-crystal containing lattice-translocation defects.</title>
        <authorList>
            <person name="Wang J."/>
            <person name="Rho S.H."/>
            <person name="Park H.H."/>
            <person name="Eom S.H."/>
        </authorList>
    </citation>
    <scope>X-RAY CRYSTALLOGRAPHY (4.16 ANGSTROMS) IN COMPLEX WITH B.SUBTILIS HSLV AND ADP</scope>
</reference>
<proteinExistence type="evidence at protein level"/>
<evidence type="ECO:0000269" key="1">
    <source>
    </source>
</evidence>
<evidence type="ECO:0000269" key="2">
    <source>
    </source>
</evidence>
<evidence type="ECO:0000269" key="3">
    <source>
    </source>
</evidence>
<evidence type="ECO:0000269" key="4">
    <source>
    </source>
</evidence>
<evidence type="ECO:0000269" key="5">
    <source>
    </source>
</evidence>
<evidence type="ECO:0000269" key="6">
    <source>
    </source>
</evidence>
<evidence type="ECO:0000269" key="7">
    <source>
    </source>
</evidence>
<evidence type="ECO:0000269" key="8">
    <source>
    </source>
</evidence>
<evidence type="ECO:0000269" key="9">
    <source>
    </source>
</evidence>
<evidence type="ECO:0000269" key="10">
    <source>
    </source>
</evidence>
<evidence type="ECO:0000269" key="11">
    <source>
    </source>
</evidence>
<evidence type="ECO:0000269" key="12">
    <source>
    </source>
</evidence>
<evidence type="ECO:0000269" key="13">
    <source>
    </source>
</evidence>
<evidence type="ECO:0000305" key="14"/>
<evidence type="ECO:0007829" key="15">
    <source>
        <dbReference type="PDB" id="1DO0"/>
    </source>
</evidence>
<evidence type="ECO:0007829" key="16">
    <source>
        <dbReference type="PDB" id="1E94"/>
    </source>
</evidence>
<evidence type="ECO:0007829" key="17">
    <source>
        <dbReference type="PDB" id="1HQY"/>
    </source>
</evidence>
<evidence type="ECO:0007829" key="18">
    <source>
        <dbReference type="PDB" id="6PXI"/>
    </source>
</evidence>
<protein>
    <recommendedName>
        <fullName>ATP-dependent protease ATPase subunit HslU</fullName>
    </recommendedName>
    <alternativeName>
        <fullName>Heat shock protein HslU</fullName>
    </alternativeName>
    <alternativeName>
        <fullName>Unfoldase HslU</fullName>
    </alternativeName>
</protein>
<gene>
    <name type="primary">hslU</name>
    <name type="synonym">htpI</name>
    <name type="ordered locus">b3931</name>
    <name type="ordered locus">JW3902</name>
</gene>
<feature type="chain" id="PRO_0000160500" description="ATP-dependent protease ATPase subunit HslU">
    <location>
        <begin position="1"/>
        <end position="443"/>
    </location>
</feature>
<feature type="binding site">
    <location>
        <position position="18"/>
    </location>
    <ligand>
        <name>ATP</name>
        <dbReference type="ChEBI" id="CHEBI:30616"/>
    </ligand>
</feature>
<feature type="binding site">
    <location>
        <begin position="60"/>
        <end position="65"/>
    </location>
    <ligand>
        <name>ATP</name>
        <dbReference type="ChEBI" id="CHEBI:30616"/>
    </ligand>
</feature>
<feature type="binding site">
    <location>
        <position position="256"/>
    </location>
    <ligand>
        <name>ATP</name>
        <dbReference type="ChEBI" id="CHEBI:30616"/>
    </ligand>
</feature>
<feature type="binding site">
    <location>
        <position position="321"/>
    </location>
    <ligand>
        <name>ATP</name>
        <dbReference type="ChEBI" id="CHEBI:30616"/>
    </ligand>
</feature>
<feature type="binding site">
    <location>
        <position position="393"/>
    </location>
    <ligand>
        <name>ATP</name>
        <dbReference type="ChEBI" id="CHEBI:30616"/>
    </ligand>
</feature>
<feature type="mutagenesis site" description="Can neither bind nor hydrolyze ATP. Do not form multimers, but stays as monomer." evidence="10">
    <original>K</original>
    <variation>T</variation>
    <location>
        <position position="63"/>
    </location>
</feature>
<feature type="mutagenesis site" description="Some effect on protease activity." evidence="3">
    <original>K</original>
    <variation>T</variation>
    <location>
        <position position="80"/>
    </location>
</feature>
<feature type="mutagenesis site" description="Severely reduced protease activity." evidence="3">
    <original>E</original>
    <variation>Q</variation>
    <location>
        <position position="88"/>
    </location>
</feature>
<feature type="mutagenesis site" description="Partial loss of protease activity." evidence="3">
    <original>Y</original>
    <variation>G</variation>
    <location>
        <position position="91"/>
    </location>
</feature>
<feature type="mutagenesis site" description="Partial loss of protease activity." evidence="3">
    <original>V</original>
    <variation>G</variation>
    <location>
        <position position="92"/>
    </location>
</feature>
<feature type="mutagenesis site" description="Almost no protease or ATP hydrolysis activity." evidence="3">
    <original>G</original>
    <variation>A</variation>
    <location>
        <position position="93"/>
    </location>
</feature>
<feature type="mutagenesis site" description="Partial loss of protease activity." evidence="3">
    <original>E</original>
    <variation>W</variation>
    <location>
        <position position="95"/>
    </location>
</feature>
<feature type="mutagenesis site" description="No effect on ATP hydrolysis. Can support HslV-mediated proteolysis at wild-type levels." evidence="13">
    <original>C</original>
    <variation>V</variation>
    <location>
        <position position="262"/>
    </location>
</feature>
<feature type="mutagenesis site" description="No effect." evidence="3">
    <original>E</original>
    <variation>Q</variation>
    <location>
        <position position="266"/>
    </location>
</feature>
<feature type="mutagenesis site" description="Reduced protease activity." evidence="3">
    <original>E</original>
    <variation>Q</variation>
    <location>
        <position position="286"/>
    </location>
</feature>
<feature type="mutagenesis site" description="No ATP hydrolysis activity. Binds ATP with lower affinity than wild-type. Can support HslV-mediated proteolysis to some extent." evidence="13">
    <original>C</original>
    <variation>V</variation>
    <location>
        <position position="288"/>
    </location>
</feature>
<feature type="mutagenesis site" description="No effect." evidence="3">
    <original>I</original>
    <variation>W</variation>
    <location>
        <position position="312"/>
    </location>
</feature>
<feature type="mutagenesis site" description="Complete loss of activity." evidence="3">
    <original>E</original>
    <variation>Q</variation>
    <location>
        <position position="321"/>
    </location>
</feature>
<feature type="mutagenesis site" description="Complete loss of activity. Forms wild-type complexes with HslV and is able to bind ATP." evidence="3">
    <original>R</original>
    <variation>E</variation>
    <location>
        <position position="325"/>
    </location>
</feature>
<feature type="mutagenesis site" description="No effect." evidence="3">
    <original>E</original>
    <variation>K</variation>
    <location>
        <position position="385"/>
    </location>
</feature>
<feature type="mutagenesis site" description="Complete loss of activity." evidence="3">
    <original>R</original>
    <variation>A</variation>
    <location>
        <position position="393"/>
    </location>
</feature>
<feature type="mutagenesis site" description="Partial loss of protease activity; when associated with K-437.">
    <original>E</original>
    <variation>K</variation>
    <location>
        <position position="436"/>
    </location>
</feature>
<feature type="mutagenesis site" description="Partial loss of protease activity; when associated with K-436.">
    <original>D</original>
    <variation>K</variation>
    <location>
        <position position="437"/>
    </location>
</feature>
<feature type="helix" evidence="16">
    <location>
        <begin position="6"/>
        <end position="14"/>
    </location>
</feature>
<feature type="helix" evidence="16">
    <location>
        <begin position="21"/>
        <end position="38"/>
    </location>
</feature>
<feature type="helix" evidence="16">
    <location>
        <begin position="42"/>
        <end position="47"/>
    </location>
</feature>
<feature type="strand" evidence="16">
    <location>
        <begin position="53"/>
        <end position="56"/>
    </location>
</feature>
<feature type="helix" evidence="16">
    <location>
        <begin position="63"/>
        <end position="71"/>
    </location>
</feature>
<feature type="turn" evidence="16">
    <location>
        <begin position="72"/>
        <end position="75"/>
    </location>
</feature>
<feature type="strand" evidence="16">
    <location>
        <begin position="78"/>
        <end position="82"/>
    </location>
</feature>
<feature type="helix" evidence="16">
    <location>
        <begin position="83"/>
        <end position="90"/>
    </location>
</feature>
<feature type="helix" evidence="16">
    <location>
        <begin position="98"/>
        <end position="113"/>
    </location>
</feature>
<feature type="turn" evidence="16">
    <location>
        <begin position="114"/>
        <end position="117"/>
    </location>
</feature>
<feature type="helix" evidence="16">
    <location>
        <begin position="118"/>
        <end position="121"/>
    </location>
</feature>
<feature type="strand" evidence="16">
    <location>
        <begin position="124"/>
        <end position="126"/>
    </location>
</feature>
<feature type="helix" evidence="16">
    <location>
        <begin position="127"/>
        <end position="132"/>
    </location>
</feature>
<feature type="turn" evidence="16">
    <location>
        <begin position="133"/>
        <end position="135"/>
    </location>
</feature>
<feature type="helix" evidence="16">
    <location>
        <begin position="147"/>
        <end position="149"/>
    </location>
</feature>
<feature type="turn" evidence="17">
    <location>
        <begin position="150"/>
        <end position="154"/>
    </location>
</feature>
<feature type="helix" evidence="16">
    <location>
        <begin position="155"/>
        <end position="161"/>
    </location>
</feature>
<feature type="strand" evidence="15">
    <location>
        <begin position="171"/>
        <end position="173"/>
    </location>
</feature>
<feature type="helix" evidence="18">
    <location>
        <begin position="190"/>
        <end position="192"/>
    </location>
</feature>
<feature type="helix" evidence="18">
    <location>
        <begin position="193"/>
        <end position="205"/>
    </location>
</feature>
<feature type="strand" evidence="15">
    <location>
        <begin position="214"/>
        <end position="216"/>
    </location>
</feature>
<feature type="helix" evidence="16">
    <location>
        <begin position="224"/>
        <end position="232"/>
    </location>
</feature>
<feature type="helix" evidence="16">
    <location>
        <begin position="237"/>
        <end position="240"/>
    </location>
</feature>
<feature type="helix" evidence="16">
    <location>
        <begin position="242"/>
        <end position="250"/>
    </location>
</feature>
<feature type="strand" evidence="16">
    <location>
        <begin position="252"/>
        <end position="256"/>
    </location>
</feature>
<feature type="helix" evidence="16">
    <location>
        <begin position="258"/>
        <end position="261"/>
    </location>
</feature>
<feature type="helix" evidence="16">
    <location>
        <begin position="269"/>
        <end position="286"/>
    </location>
</feature>
<feature type="strand" evidence="16">
    <location>
        <begin position="289"/>
        <end position="292"/>
    </location>
</feature>
<feature type="strand" evidence="16">
    <location>
        <begin position="295"/>
        <end position="298"/>
    </location>
</feature>
<feature type="helix" evidence="16">
    <location>
        <begin position="299"/>
        <end position="301"/>
    </location>
</feature>
<feature type="strand" evidence="16">
    <location>
        <begin position="303"/>
        <end position="308"/>
    </location>
</feature>
<feature type="strand" evidence="16">
    <location>
        <begin position="311"/>
        <end position="313"/>
    </location>
</feature>
<feature type="helix" evidence="16">
    <location>
        <begin position="315"/>
        <end position="317"/>
    </location>
</feature>
<feature type="helix" evidence="16">
    <location>
        <begin position="320"/>
        <end position="324"/>
    </location>
</feature>
<feature type="strand" evidence="16">
    <location>
        <begin position="328"/>
        <end position="331"/>
    </location>
</feature>
<feature type="helix" evidence="16">
    <location>
        <begin position="337"/>
        <end position="345"/>
    </location>
</feature>
<feature type="helix" evidence="16">
    <location>
        <begin position="351"/>
        <end position="361"/>
    </location>
</feature>
<feature type="strand" evidence="16">
    <location>
        <begin position="365"/>
        <end position="368"/>
    </location>
</feature>
<feature type="helix" evidence="16">
    <location>
        <begin position="370"/>
        <end position="386"/>
    </location>
</feature>
<feature type="helix" evidence="16">
    <location>
        <begin position="393"/>
        <end position="409"/>
    </location>
</feature>
<feature type="helix" evidence="16">
    <location>
        <begin position="410"/>
        <end position="413"/>
    </location>
</feature>
<feature type="strand" evidence="16">
    <location>
        <begin position="417"/>
        <end position="420"/>
    </location>
</feature>
<feature type="helix" evidence="16">
    <location>
        <begin position="422"/>
        <end position="434"/>
    </location>
</feature>
<feature type="helix" evidence="16">
    <location>
        <begin position="436"/>
        <end position="442"/>
    </location>
</feature>
<keyword id="KW-0002">3D-structure</keyword>
<keyword id="KW-0067">ATP-binding</keyword>
<keyword id="KW-0143">Chaperone</keyword>
<keyword id="KW-0963">Cytoplasm</keyword>
<keyword id="KW-0547">Nucleotide-binding</keyword>
<keyword id="KW-1185">Reference proteome</keyword>
<keyword id="KW-0346">Stress response</keyword>